<reference key="1">
    <citation type="submission" date="2007-03" db="EMBL/GenBank/DDBJ databases">
        <title>Genome sequence of Rhodospirillum centenum.</title>
        <authorList>
            <person name="Touchman J.W."/>
            <person name="Bauer C."/>
            <person name="Blankenship R.E."/>
        </authorList>
    </citation>
    <scope>NUCLEOTIDE SEQUENCE [LARGE SCALE GENOMIC DNA]</scope>
    <source>
        <strain>ATCC 51521 / SW</strain>
    </source>
</reference>
<gene>
    <name evidence="1" type="primary">lipA</name>
    <name type="ordered locus">RC1_0123</name>
</gene>
<sequence length="325" mass="35757">MPIAPDRVRHPEKANRPDNPIQRKPEWLRVKAPTSPEYGETRSLMRGLRLNTVCEEAACPNIGECWKKKHATFMILGAVCTRACAFCNVATGRPDQLDPHEPEKVAEAVAHLKLEHIVVTSVDRDDLEDGGAGHFARTIRAIRAAAPGTTIEVLTPDFMKKKGAVETVVEARPDVFNHNLETAPRLYPTIRPGARYFTSLQLLARVKEIDPSMFTKSGIMVGLGETKEEVFQVMDDLRAADVDFMTIGQYLAPTPKHAKVDRFVTPDEFAGYVTVGRGKGFLMVASSPLTRSSYHAGADFERLRAAREAKLAGRPVAAPEATSAE</sequence>
<proteinExistence type="inferred from homology"/>
<comment type="function">
    <text evidence="1">Catalyzes the radical-mediated insertion of two sulfur atoms into the C-6 and C-8 positions of the octanoyl moiety bound to the lipoyl domains of lipoate-dependent enzymes, thereby converting the octanoylated domains into lipoylated derivatives.</text>
</comment>
<comment type="catalytic activity">
    <reaction evidence="1">
        <text>[[Fe-S] cluster scaffold protein carrying a second [4Fe-4S](2+) cluster] + N(6)-octanoyl-L-lysyl-[protein] + 2 oxidized [2Fe-2S]-[ferredoxin] + 2 S-adenosyl-L-methionine + 4 H(+) = [[Fe-S] cluster scaffold protein] + N(6)-[(R)-dihydrolipoyl]-L-lysyl-[protein] + 4 Fe(3+) + 2 hydrogen sulfide + 2 5'-deoxyadenosine + 2 L-methionine + 2 reduced [2Fe-2S]-[ferredoxin]</text>
        <dbReference type="Rhea" id="RHEA:16585"/>
        <dbReference type="Rhea" id="RHEA-COMP:9928"/>
        <dbReference type="Rhea" id="RHEA-COMP:10000"/>
        <dbReference type="Rhea" id="RHEA-COMP:10001"/>
        <dbReference type="Rhea" id="RHEA-COMP:10475"/>
        <dbReference type="Rhea" id="RHEA-COMP:14568"/>
        <dbReference type="Rhea" id="RHEA-COMP:14569"/>
        <dbReference type="ChEBI" id="CHEBI:15378"/>
        <dbReference type="ChEBI" id="CHEBI:17319"/>
        <dbReference type="ChEBI" id="CHEBI:29034"/>
        <dbReference type="ChEBI" id="CHEBI:29919"/>
        <dbReference type="ChEBI" id="CHEBI:33722"/>
        <dbReference type="ChEBI" id="CHEBI:33737"/>
        <dbReference type="ChEBI" id="CHEBI:33738"/>
        <dbReference type="ChEBI" id="CHEBI:57844"/>
        <dbReference type="ChEBI" id="CHEBI:59789"/>
        <dbReference type="ChEBI" id="CHEBI:78809"/>
        <dbReference type="ChEBI" id="CHEBI:83100"/>
        <dbReference type="EC" id="2.8.1.8"/>
    </reaction>
</comment>
<comment type="cofactor">
    <cofactor evidence="1">
        <name>[4Fe-4S] cluster</name>
        <dbReference type="ChEBI" id="CHEBI:49883"/>
    </cofactor>
    <text evidence="1">Binds 2 [4Fe-4S] clusters per subunit. One cluster is coordinated with 3 cysteines and an exchangeable S-adenosyl-L-methionine.</text>
</comment>
<comment type="pathway">
    <text evidence="1">Protein modification; protein lipoylation via endogenous pathway; protein N(6)-(lipoyl)lysine from octanoyl-[acyl-carrier-protein]: step 2/2.</text>
</comment>
<comment type="subcellular location">
    <subcellularLocation>
        <location evidence="1">Cytoplasm</location>
    </subcellularLocation>
</comment>
<comment type="similarity">
    <text evidence="1">Belongs to the radical SAM superfamily. Lipoyl synthase family.</text>
</comment>
<feature type="chain" id="PRO_1000204155" description="Lipoyl synthase">
    <location>
        <begin position="1"/>
        <end position="325"/>
    </location>
</feature>
<feature type="domain" description="Radical SAM core" evidence="2">
    <location>
        <begin position="66"/>
        <end position="282"/>
    </location>
</feature>
<feature type="region of interest" description="Disordered" evidence="3">
    <location>
        <begin position="1"/>
        <end position="24"/>
    </location>
</feature>
<feature type="binding site" evidence="1">
    <location>
        <position position="54"/>
    </location>
    <ligand>
        <name>[4Fe-4S] cluster</name>
        <dbReference type="ChEBI" id="CHEBI:49883"/>
        <label>1</label>
    </ligand>
</feature>
<feature type="binding site" evidence="1">
    <location>
        <position position="59"/>
    </location>
    <ligand>
        <name>[4Fe-4S] cluster</name>
        <dbReference type="ChEBI" id="CHEBI:49883"/>
        <label>1</label>
    </ligand>
</feature>
<feature type="binding site" evidence="1">
    <location>
        <position position="65"/>
    </location>
    <ligand>
        <name>[4Fe-4S] cluster</name>
        <dbReference type="ChEBI" id="CHEBI:49883"/>
        <label>1</label>
    </ligand>
</feature>
<feature type="binding site" evidence="1">
    <location>
        <position position="80"/>
    </location>
    <ligand>
        <name>[4Fe-4S] cluster</name>
        <dbReference type="ChEBI" id="CHEBI:49883"/>
        <label>2</label>
        <note>4Fe-4S-S-AdoMet</note>
    </ligand>
</feature>
<feature type="binding site" evidence="1">
    <location>
        <position position="84"/>
    </location>
    <ligand>
        <name>[4Fe-4S] cluster</name>
        <dbReference type="ChEBI" id="CHEBI:49883"/>
        <label>2</label>
        <note>4Fe-4S-S-AdoMet</note>
    </ligand>
</feature>
<feature type="binding site" evidence="1">
    <location>
        <position position="87"/>
    </location>
    <ligand>
        <name>[4Fe-4S] cluster</name>
        <dbReference type="ChEBI" id="CHEBI:49883"/>
        <label>2</label>
        <note>4Fe-4S-S-AdoMet</note>
    </ligand>
</feature>
<feature type="binding site" evidence="1">
    <location>
        <position position="293"/>
    </location>
    <ligand>
        <name>[4Fe-4S] cluster</name>
        <dbReference type="ChEBI" id="CHEBI:49883"/>
        <label>1</label>
    </ligand>
</feature>
<evidence type="ECO:0000255" key="1">
    <source>
        <dbReference type="HAMAP-Rule" id="MF_00206"/>
    </source>
</evidence>
<evidence type="ECO:0000255" key="2">
    <source>
        <dbReference type="PROSITE-ProRule" id="PRU01266"/>
    </source>
</evidence>
<evidence type="ECO:0000256" key="3">
    <source>
        <dbReference type="SAM" id="MobiDB-lite"/>
    </source>
</evidence>
<organism>
    <name type="scientific">Rhodospirillum centenum (strain ATCC 51521 / SW)</name>
    <dbReference type="NCBI Taxonomy" id="414684"/>
    <lineage>
        <taxon>Bacteria</taxon>
        <taxon>Pseudomonadati</taxon>
        <taxon>Pseudomonadota</taxon>
        <taxon>Alphaproteobacteria</taxon>
        <taxon>Rhodospirillales</taxon>
        <taxon>Rhodospirillaceae</taxon>
        <taxon>Rhodospirillum</taxon>
    </lineage>
</organism>
<accession>B6IQ36</accession>
<keyword id="KW-0004">4Fe-4S</keyword>
<keyword id="KW-0963">Cytoplasm</keyword>
<keyword id="KW-0408">Iron</keyword>
<keyword id="KW-0411">Iron-sulfur</keyword>
<keyword id="KW-0479">Metal-binding</keyword>
<keyword id="KW-1185">Reference proteome</keyword>
<keyword id="KW-0949">S-adenosyl-L-methionine</keyword>
<keyword id="KW-0808">Transferase</keyword>
<protein>
    <recommendedName>
        <fullName evidence="1">Lipoyl synthase</fullName>
        <ecNumber evidence="1">2.8.1.8</ecNumber>
    </recommendedName>
    <alternativeName>
        <fullName evidence="1">Lip-syn</fullName>
        <shortName evidence="1">LS</shortName>
    </alternativeName>
    <alternativeName>
        <fullName evidence="1">Lipoate synthase</fullName>
    </alternativeName>
    <alternativeName>
        <fullName evidence="1">Lipoic acid synthase</fullName>
    </alternativeName>
    <alternativeName>
        <fullName evidence="1">Sulfur insertion protein LipA</fullName>
    </alternativeName>
</protein>
<name>LIPA_RHOCS</name>
<dbReference type="EC" id="2.8.1.8" evidence="1"/>
<dbReference type="EMBL" id="CP000613">
    <property type="protein sequence ID" value="ACI97572.1"/>
    <property type="molecule type" value="Genomic_DNA"/>
</dbReference>
<dbReference type="RefSeq" id="WP_012565363.1">
    <property type="nucleotide sequence ID" value="NC_011420.2"/>
</dbReference>
<dbReference type="SMR" id="B6IQ36"/>
<dbReference type="STRING" id="414684.RC1_0123"/>
<dbReference type="KEGG" id="rce:RC1_0123"/>
<dbReference type="eggNOG" id="COG0320">
    <property type="taxonomic scope" value="Bacteria"/>
</dbReference>
<dbReference type="HOGENOM" id="CLU_033144_2_1_5"/>
<dbReference type="OrthoDB" id="9787898at2"/>
<dbReference type="UniPathway" id="UPA00538">
    <property type="reaction ID" value="UER00593"/>
</dbReference>
<dbReference type="Proteomes" id="UP000001591">
    <property type="component" value="Chromosome"/>
</dbReference>
<dbReference type="GO" id="GO:0005737">
    <property type="term" value="C:cytoplasm"/>
    <property type="evidence" value="ECO:0007669"/>
    <property type="project" value="UniProtKB-SubCell"/>
</dbReference>
<dbReference type="GO" id="GO:0051539">
    <property type="term" value="F:4 iron, 4 sulfur cluster binding"/>
    <property type="evidence" value="ECO:0007669"/>
    <property type="project" value="UniProtKB-UniRule"/>
</dbReference>
<dbReference type="GO" id="GO:0016992">
    <property type="term" value="F:lipoate synthase activity"/>
    <property type="evidence" value="ECO:0007669"/>
    <property type="project" value="UniProtKB-UniRule"/>
</dbReference>
<dbReference type="GO" id="GO:0046872">
    <property type="term" value="F:metal ion binding"/>
    <property type="evidence" value="ECO:0007669"/>
    <property type="project" value="UniProtKB-KW"/>
</dbReference>
<dbReference type="CDD" id="cd01335">
    <property type="entry name" value="Radical_SAM"/>
    <property type="match status" value="1"/>
</dbReference>
<dbReference type="FunFam" id="3.20.20.70:FF:000040">
    <property type="entry name" value="Lipoyl synthase"/>
    <property type="match status" value="1"/>
</dbReference>
<dbReference type="Gene3D" id="3.20.20.70">
    <property type="entry name" value="Aldolase class I"/>
    <property type="match status" value="1"/>
</dbReference>
<dbReference type="HAMAP" id="MF_00206">
    <property type="entry name" value="Lipoyl_synth"/>
    <property type="match status" value="1"/>
</dbReference>
<dbReference type="InterPro" id="IPR013785">
    <property type="entry name" value="Aldolase_TIM"/>
</dbReference>
<dbReference type="InterPro" id="IPR006638">
    <property type="entry name" value="Elp3/MiaA/NifB-like_rSAM"/>
</dbReference>
<dbReference type="InterPro" id="IPR031691">
    <property type="entry name" value="LIAS_N"/>
</dbReference>
<dbReference type="InterPro" id="IPR003698">
    <property type="entry name" value="Lipoyl_synth"/>
</dbReference>
<dbReference type="InterPro" id="IPR007197">
    <property type="entry name" value="rSAM"/>
</dbReference>
<dbReference type="NCBIfam" id="TIGR00510">
    <property type="entry name" value="lipA"/>
    <property type="match status" value="1"/>
</dbReference>
<dbReference type="NCBIfam" id="NF004019">
    <property type="entry name" value="PRK05481.1"/>
    <property type="match status" value="1"/>
</dbReference>
<dbReference type="NCBIfam" id="NF009544">
    <property type="entry name" value="PRK12928.1"/>
    <property type="match status" value="1"/>
</dbReference>
<dbReference type="PANTHER" id="PTHR10949">
    <property type="entry name" value="LIPOYL SYNTHASE"/>
    <property type="match status" value="1"/>
</dbReference>
<dbReference type="PANTHER" id="PTHR10949:SF0">
    <property type="entry name" value="LIPOYL SYNTHASE, MITOCHONDRIAL"/>
    <property type="match status" value="1"/>
</dbReference>
<dbReference type="Pfam" id="PF16881">
    <property type="entry name" value="LIAS_N"/>
    <property type="match status" value="1"/>
</dbReference>
<dbReference type="Pfam" id="PF04055">
    <property type="entry name" value="Radical_SAM"/>
    <property type="match status" value="1"/>
</dbReference>
<dbReference type="PIRSF" id="PIRSF005963">
    <property type="entry name" value="Lipoyl_synth"/>
    <property type="match status" value="1"/>
</dbReference>
<dbReference type="SFLD" id="SFLDF00271">
    <property type="entry name" value="lipoyl_synthase"/>
    <property type="match status" value="1"/>
</dbReference>
<dbReference type="SFLD" id="SFLDS00029">
    <property type="entry name" value="Radical_SAM"/>
    <property type="match status" value="1"/>
</dbReference>
<dbReference type="SMART" id="SM00729">
    <property type="entry name" value="Elp3"/>
    <property type="match status" value="1"/>
</dbReference>
<dbReference type="SUPFAM" id="SSF102114">
    <property type="entry name" value="Radical SAM enzymes"/>
    <property type="match status" value="1"/>
</dbReference>
<dbReference type="PROSITE" id="PS51918">
    <property type="entry name" value="RADICAL_SAM"/>
    <property type="match status" value="1"/>
</dbReference>